<keyword id="KW-0137">Centromere</keyword>
<keyword id="KW-0158">Chromosome</keyword>
<keyword id="KW-0175">Coiled coil</keyword>
<keyword id="KW-0995">Kinetochore</keyword>
<keyword id="KW-0539">Nucleus</keyword>
<keyword id="KW-1185">Reference proteome</keyword>
<organism>
    <name type="scientific">Xenopus laevis</name>
    <name type="common">African clawed frog</name>
    <dbReference type="NCBI Taxonomy" id="8355"/>
    <lineage>
        <taxon>Eukaryota</taxon>
        <taxon>Metazoa</taxon>
        <taxon>Chordata</taxon>
        <taxon>Craniata</taxon>
        <taxon>Vertebrata</taxon>
        <taxon>Euteleostomi</taxon>
        <taxon>Amphibia</taxon>
        <taxon>Batrachia</taxon>
        <taxon>Anura</taxon>
        <taxon>Pipoidea</taxon>
        <taxon>Pipidae</taxon>
        <taxon>Xenopodinae</taxon>
        <taxon>Xenopus</taxon>
        <taxon>Xenopus</taxon>
    </lineage>
</organism>
<gene>
    <name type="primary">cenpk</name>
</gene>
<dbReference type="EMBL" id="BC084426">
    <property type="protein sequence ID" value="AAH84426.1"/>
    <property type="status" value="ALT_INIT"/>
    <property type="molecule type" value="mRNA"/>
</dbReference>
<dbReference type="RefSeq" id="NP_001088353.1">
    <property type="nucleotide sequence ID" value="NM_001094884.1"/>
</dbReference>
<dbReference type="SMR" id="Q5XGL1"/>
<dbReference type="DNASU" id="495196"/>
<dbReference type="GeneID" id="495196"/>
<dbReference type="KEGG" id="xla:495196"/>
<dbReference type="AGR" id="Xenbase:XB-GENE-17337946"/>
<dbReference type="CTD" id="495196"/>
<dbReference type="Xenbase" id="XB-GENE-17337946">
    <property type="gene designation" value="cenpk.L"/>
</dbReference>
<dbReference type="OrthoDB" id="9445768at2759"/>
<dbReference type="Proteomes" id="UP000186698">
    <property type="component" value="Chromosome 1L"/>
</dbReference>
<dbReference type="Bgee" id="495196">
    <property type="expression patterns" value="Expressed in testis and 19 other cell types or tissues"/>
</dbReference>
<dbReference type="GO" id="GO:0000776">
    <property type="term" value="C:kinetochore"/>
    <property type="evidence" value="ECO:0007669"/>
    <property type="project" value="UniProtKB-KW"/>
</dbReference>
<dbReference type="GO" id="GO:0005634">
    <property type="term" value="C:nucleus"/>
    <property type="evidence" value="ECO:0007669"/>
    <property type="project" value="UniProtKB-SubCell"/>
</dbReference>
<dbReference type="GO" id="GO:0051382">
    <property type="term" value="P:kinetochore assembly"/>
    <property type="evidence" value="ECO:0007669"/>
    <property type="project" value="InterPro"/>
</dbReference>
<dbReference type="GO" id="GO:0000070">
    <property type="term" value="P:mitotic sister chromatid segregation"/>
    <property type="evidence" value="ECO:0000318"/>
    <property type="project" value="GO_Central"/>
</dbReference>
<dbReference type="InterPro" id="IPR020993">
    <property type="entry name" value="Centromere_CenpK"/>
</dbReference>
<dbReference type="PANTHER" id="PTHR14401">
    <property type="entry name" value="CENTROMERE PROTEIN K"/>
    <property type="match status" value="1"/>
</dbReference>
<dbReference type="PANTHER" id="PTHR14401:SF6">
    <property type="entry name" value="CENTROMERE PROTEIN K"/>
    <property type="match status" value="1"/>
</dbReference>
<dbReference type="Pfam" id="PF11802">
    <property type="entry name" value="CENP-K"/>
    <property type="match status" value="1"/>
</dbReference>
<reference key="1">
    <citation type="submission" date="2004-10" db="EMBL/GenBank/DDBJ databases">
        <authorList>
            <consortium name="NIH - Xenopus Gene Collection (XGC) project"/>
        </authorList>
    </citation>
    <scope>NUCLEOTIDE SEQUENCE [LARGE SCALE MRNA]</scope>
    <source>
        <tissue>Kidney</tissue>
    </source>
</reference>
<accession>Q5XGL1</accession>
<proteinExistence type="evidence at transcript level"/>
<name>CENPK_XENLA</name>
<protein>
    <recommendedName>
        <fullName>Centromere protein K</fullName>
        <shortName>CENP-K</shortName>
    </recommendedName>
</protein>
<comment type="function">
    <text evidence="1">Probable component of a centromeric complex involved in assembly of kinetochore proteins, mitotic progression and chromosome segregation.</text>
</comment>
<comment type="subcellular location">
    <subcellularLocation>
        <location evidence="1">Nucleus</location>
    </subcellularLocation>
    <subcellularLocation>
        <location evidence="1">Chromosome</location>
        <location evidence="1">Centromere</location>
    </subcellularLocation>
    <subcellularLocation>
        <location evidence="1">Chromosome</location>
        <location evidence="1">Centromere</location>
        <location evidence="1">Kinetochore</location>
    </subcellularLocation>
    <text evidence="1">Localizes exclusively in the centromeres.</text>
</comment>
<comment type="similarity">
    <text evidence="4">Belongs to the CENP-K/MCM22 family.</text>
</comment>
<comment type="sequence caution" evidence="4">
    <conflict type="erroneous initiation">
        <sequence resource="EMBL-CDS" id="AAH84426"/>
    </conflict>
</comment>
<sequence length="274" mass="31888">MSGYQHELPPNISKTSPAPEEAREELLQQCEAIWKQMEECQSKLTMSGPETLPETDVQLYLLMMQVKALTAEYEQWQKRTPEIISDNQDVLLAVGKEELEKIAQELEMVLSSVQAKNKKLKKDLEKEQNWLDGQQKIVDALTSRQDELKNQLTAFSEKRVYQDIAGKLYKVRAHKEELLSALGDFLEEHFPLPQEQENQSKKKKGQSGKKSVQLMTLHEILEILINKLMTTPHDPYLVLEPHHWPPYIEMLLRYGIALRHPEDPKRIRLEAFHQ</sequence>
<evidence type="ECO:0000250" key="1"/>
<evidence type="ECO:0000255" key="2"/>
<evidence type="ECO:0000256" key="3">
    <source>
        <dbReference type="SAM" id="MobiDB-lite"/>
    </source>
</evidence>
<evidence type="ECO:0000305" key="4"/>
<feature type="chain" id="PRO_0000249485" description="Centromere protein K">
    <location>
        <begin position="1"/>
        <end position="274"/>
    </location>
</feature>
<feature type="region of interest" description="Disordered" evidence="3">
    <location>
        <begin position="1"/>
        <end position="21"/>
    </location>
</feature>
<feature type="coiled-coil region" evidence="2">
    <location>
        <begin position="96"/>
        <end position="159"/>
    </location>
</feature>